<proteinExistence type="evidence at protein level"/>
<sequence>RNGLPGPIGPAG</sequence>
<keyword id="KW-0903">Direct protein sequencing</keyword>
<keyword id="KW-0272">Extracellular matrix</keyword>
<keyword id="KW-0964">Secreted</keyword>
<name>CO1A2_CROSI</name>
<evidence type="ECO:0000250" key="1">
    <source>
        <dbReference type="UniProtKB" id="P02454"/>
    </source>
</evidence>
<evidence type="ECO:0000255" key="2">
    <source>
        <dbReference type="PROSITE-ProRule" id="PRU00793"/>
    </source>
</evidence>
<evidence type="ECO:0000303" key="3">
    <source ref="1"/>
</evidence>
<evidence type="ECO:0000305" key="4"/>
<comment type="function">
    <text evidence="4">Type I collagen is a member of group I collagen (fibrillar forming collagen).</text>
</comment>
<comment type="subunit">
    <text evidence="1">Trimers of one alpha 2(I) and two alpha 1(I) chains.</text>
</comment>
<comment type="subcellular location">
    <subcellularLocation>
        <location evidence="2">Secreted</location>
        <location evidence="2">Extracellular space</location>
        <location evidence="2">Extracellular matrix</location>
    </subcellularLocation>
</comment>
<comment type="similarity">
    <text evidence="4">Belongs to the fibrillar collagen family.</text>
</comment>
<protein>
    <recommendedName>
        <fullName evidence="4">Collagen alpha-2(I) chain homolog</fullName>
    </recommendedName>
    <alternativeName>
        <fullName evidence="3">Peptide 4</fullName>
    </alternativeName>
</protein>
<organism>
    <name type="scientific">Crocodylus siamensis</name>
    <name type="common">Siamese crocodile</name>
    <dbReference type="NCBI Taxonomy" id="68455"/>
    <lineage>
        <taxon>Eukaryota</taxon>
        <taxon>Metazoa</taxon>
        <taxon>Chordata</taxon>
        <taxon>Craniata</taxon>
        <taxon>Vertebrata</taxon>
        <taxon>Euteleostomi</taxon>
        <taxon>Archelosauria</taxon>
        <taxon>Archosauria</taxon>
        <taxon>Crocodylia</taxon>
        <taxon>Longirostres</taxon>
        <taxon>Crocodylidae</taxon>
        <taxon>Crocodylus</taxon>
    </lineage>
</organism>
<accession>C0HM51</accession>
<dbReference type="GO" id="GO:0005576">
    <property type="term" value="C:extracellular region"/>
    <property type="evidence" value="ECO:0007669"/>
    <property type="project" value="UniProtKB-KW"/>
</dbReference>
<reference key="1">
    <citation type="submission" date="2022-06" db="UniProtKB">
        <title>Isolation and identification of antioxidative peptides from crocodile meat hydrolysates using silica gel chromatography.</title>
        <authorList>
            <person name="Liu Y."/>
            <person name="Yan X."/>
            <person name="Rui C."/>
            <person name="He N."/>
            <person name="Hai-Hang L."/>
        </authorList>
    </citation>
    <scope>PROTEIN SEQUENCE</scope>
</reference>
<feature type="chain" id="PRO_0000456656" description="Collagen alpha-2(I) chain homolog">
    <location>
        <begin position="1" status="less than"/>
        <end position="12" status="greater than"/>
    </location>
</feature>
<feature type="non-terminal residue" evidence="3">
    <location>
        <position position="1"/>
    </location>
</feature>
<feature type="non-terminal residue" evidence="3">
    <location>
        <position position="12"/>
    </location>
</feature>